<sequence length="642" mass="72635">MAIGKRKESTEVKKKDGSMNKRVKVAKLPKKVDSFSPKKKKNTTSSGSSESDSMSQNDKKKDSSLNESEDEDFAGFGESASENDELESAESEAENDEESSSQKSNSKESHAQRKKLQKERKAMKPFADTSLKAKSLWDKLRQKTSIKAEERKTIIAELFDLIRTNVKQLVFKHDMSRVVQTCVKFGSKQQRETICAELAGSYVDLCKSPYGKYLAIKIFKYGTPKMKEVILGEMYGNVVKMIRHREAAYVVEDAFREFTNLQQQRALICEFYGPEFQVFKDRTQDIHIDKLLIDHPEKRPSIMQNLWKTIEGSIAKGSIGFTMVHRAMLEFINHADSNEAKELLNLTKELIYEFVHTRDGSQVAMKLFALANAKDRKVMLKSLRPYLIETAKDSYGHLVVVAALDCTDDTIMTGKLLQAEFEGELLKLSADKFARRILLYVLVGWEDARYFSKENRELLRSLDSLKAKTSKKDPIVRRNELKATIGPLLISLISKAAGDMIAESLASQVLVDALLYAPCEKEEAVDATLKAFDGNPEQDNHLIHQIHCSRALKTLVQNGHWSGAEKQVVKAEDDLKVASKLIVIIKKYLVEWASGDGAFVVVAVLEALSDSEKQEFLKILRKHKNQLNKSEFRGTKKLLEML</sequence>
<proteinExistence type="evidence at protein level"/>
<organism>
    <name type="scientific">Schizosaccharomyces pombe (strain 972 / ATCC 24843)</name>
    <name type="common">Fission yeast</name>
    <dbReference type="NCBI Taxonomy" id="284812"/>
    <lineage>
        <taxon>Eukaryota</taxon>
        <taxon>Fungi</taxon>
        <taxon>Dikarya</taxon>
        <taxon>Ascomycota</taxon>
        <taxon>Taphrinomycotina</taxon>
        <taxon>Schizosaccharomycetes</taxon>
        <taxon>Schizosaccharomycetales</taxon>
        <taxon>Schizosaccharomycetaceae</taxon>
        <taxon>Schizosaccharomyces</taxon>
    </lineage>
</organism>
<comment type="function">
    <text evidence="1">RNA-binding protein involved in post-transcriptional regulation.</text>
</comment>
<comment type="subcellular location">
    <subcellularLocation>
        <location evidence="4">Nucleus</location>
        <location evidence="4">Nucleolus</location>
    </subcellularLocation>
</comment>
<comment type="similarity">
    <text evidence="6">Belongs to the PUF6 family.</text>
</comment>
<gene>
    <name type="primary">puf6</name>
    <name type="ORF">SPCP1E11.11</name>
</gene>
<feature type="chain" id="PRO_0000362160" description="Pumilio homology domain family member 6">
    <location>
        <begin position="1"/>
        <end position="642"/>
    </location>
</feature>
<feature type="domain" description="PUM-HD" evidence="2">
    <location>
        <begin position="139"/>
        <end position="489"/>
    </location>
</feature>
<feature type="repeat" description="Pumilio 1">
    <location>
        <begin position="160"/>
        <end position="196"/>
    </location>
</feature>
<feature type="repeat" description="Pumilio 2">
    <location>
        <begin position="197"/>
        <end position="232"/>
    </location>
</feature>
<feature type="repeat" description="Pumilio 3">
    <location>
        <begin position="233"/>
        <end position="269"/>
    </location>
</feature>
<feature type="repeat" description="Pumilio 4">
    <location>
        <begin position="345"/>
        <end position="381"/>
    </location>
</feature>
<feature type="repeat" description="Pumilio 5">
    <location>
        <begin position="382"/>
        <end position="418"/>
    </location>
</feature>
<feature type="repeat" description="Pumilio 6">
    <location>
        <begin position="420"/>
        <end position="460"/>
    </location>
</feature>
<feature type="region of interest" description="Disordered" evidence="3">
    <location>
        <begin position="1"/>
        <end position="124"/>
    </location>
</feature>
<feature type="compositionally biased region" description="Basic and acidic residues" evidence="3">
    <location>
        <begin position="1"/>
        <end position="19"/>
    </location>
</feature>
<feature type="compositionally biased region" description="Low complexity" evidence="3">
    <location>
        <begin position="43"/>
        <end position="55"/>
    </location>
</feature>
<feature type="compositionally biased region" description="Acidic residues" evidence="3">
    <location>
        <begin position="81"/>
        <end position="99"/>
    </location>
</feature>
<feature type="compositionally biased region" description="Basic residues" evidence="3">
    <location>
        <begin position="112"/>
        <end position="123"/>
    </location>
</feature>
<feature type="modified residue" description="Phosphoserine" evidence="5">
    <location>
        <position position="34"/>
    </location>
</feature>
<feature type="modified residue" description="Phosphoserine" evidence="5">
    <location>
        <position position="36"/>
    </location>
</feature>
<feature type="modified residue" description="Phosphoserine" evidence="5">
    <location>
        <position position="79"/>
    </location>
</feature>
<feature type="modified residue" description="Phosphoserine" evidence="5">
    <location>
        <position position="81"/>
    </location>
</feature>
<feature type="modified residue" description="Phosphoserine" evidence="5">
    <location>
        <position position="88"/>
    </location>
</feature>
<evidence type="ECO:0000250" key="1"/>
<evidence type="ECO:0000255" key="2">
    <source>
        <dbReference type="PROSITE-ProRule" id="PRU00318"/>
    </source>
</evidence>
<evidence type="ECO:0000256" key="3">
    <source>
        <dbReference type="SAM" id="MobiDB-lite"/>
    </source>
</evidence>
<evidence type="ECO:0000269" key="4">
    <source>
    </source>
</evidence>
<evidence type="ECO:0000269" key="5">
    <source>
    </source>
</evidence>
<evidence type="ECO:0000305" key="6"/>
<dbReference type="EMBL" id="CU329672">
    <property type="protein sequence ID" value="CAB54870.1"/>
    <property type="molecule type" value="Genomic_DNA"/>
</dbReference>
<dbReference type="PIR" id="T41690">
    <property type="entry name" value="T41690"/>
</dbReference>
<dbReference type="RefSeq" id="NP_588564.1">
    <property type="nucleotide sequence ID" value="NM_001023551.2"/>
</dbReference>
<dbReference type="SMR" id="Q9UU76"/>
<dbReference type="BioGRID" id="275414">
    <property type="interactions" value="21"/>
</dbReference>
<dbReference type="FunCoup" id="Q9UU76">
    <property type="interactions" value="605"/>
</dbReference>
<dbReference type="STRING" id="284812.Q9UU76"/>
<dbReference type="iPTMnet" id="Q9UU76"/>
<dbReference type="PaxDb" id="4896-SPCP1E11.11.1"/>
<dbReference type="EnsemblFungi" id="SPCP1E11.11.1">
    <property type="protein sequence ID" value="SPCP1E11.11.1:pep"/>
    <property type="gene ID" value="SPCP1E11.11"/>
</dbReference>
<dbReference type="GeneID" id="2538833"/>
<dbReference type="KEGG" id="spo:2538833"/>
<dbReference type="PomBase" id="SPCP1E11.11">
    <property type="gene designation" value="puf6"/>
</dbReference>
<dbReference type="VEuPathDB" id="FungiDB:SPCP1E11.11"/>
<dbReference type="eggNOG" id="KOG2050">
    <property type="taxonomic scope" value="Eukaryota"/>
</dbReference>
<dbReference type="HOGENOM" id="CLU_013994_1_0_1"/>
<dbReference type="InParanoid" id="Q9UU76"/>
<dbReference type="OMA" id="YGPEFSI"/>
<dbReference type="PhylomeDB" id="Q9UU76"/>
<dbReference type="PRO" id="PR:Q9UU76"/>
<dbReference type="Proteomes" id="UP000002485">
    <property type="component" value="Chromosome III"/>
</dbReference>
<dbReference type="GO" id="GO:0005730">
    <property type="term" value="C:nucleolus"/>
    <property type="evidence" value="ECO:0000314"/>
    <property type="project" value="PomBase"/>
</dbReference>
<dbReference type="GO" id="GO:0005634">
    <property type="term" value="C:nucleus"/>
    <property type="evidence" value="ECO:0007005"/>
    <property type="project" value="PomBase"/>
</dbReference>
<dbReference type="GO" id="GO:0003730">
    <property type="term" value="F:mRNA 3'-UTR binding"/>
    <property type="evidence" value="ECO:0000266"/>
    <property type="project" value="PomBase"/>
</dbReference>
<dbReference type="GO" id="GO:0003729">
    <property type="term" value="F:mRNA binding"/>
    <property type="evidence" value="ECO:0000318"/>
    <property type="project" value="GO_Central"/>
</dbReference>
<dbReference type="GO" id="GO:0006417">
    <property type="term" value="P:regulation of translation"/>
    <property type="evidence" value="ECO:0000318"/>
    <property type="project" value="GO_Central"/>
</dbReference>
<dbReference type="GO" id="GO:0042273">
    <property type="term" value="P:ribosomal large subunit biogenesis"/>
    <property type="evidence" value="ECO:0000266"/>
    <property type="project" value="PomBase"/>
</dbReference>
<dbReference type="Gene3D" id="1.25.10.10">
    <property type="entry name" value="Leucine-rich Repeat Variant"/>
    <property type="match status" value="1"/>
</dbReference>
<dbReference type="InterPro" id="IPR011989">
    <property type="entry name" value="ARM-like"/>
</dbReference>
<dbReference type="InterPro" id="IPR016024">
    <property type="entry name" value="ARM-type_fold"/>
</dbReference>
<dbReference type="InterPro" id="IPR012959">
    <property type="entry name" value="CPL_dom"/>
</dbReference>
<dbReference type="InterPro" id="IPR033133">
    <property type="entry name" value="PUM-HD"/>
</dbReference>
<dbReference type="InterPro" id="IPR040059">
    <property type="entry name" value="PUM3"/>
</dbReference>
<dbReference type="InterPro" id="IPR001313">
    <property type="entry name" value="Pumilio_RNA-bd_rpt"/>
</dbReference>
<dbReference type="PANTHER" id="PTHR13389">
    <property type="entry name" value="PUMILIO HOMOLOG 3"/>
    <property type="match status" value="1"/>
</dbReference>
<dbReference type="PANTHER" id="PTHR13389:SF0">
    <property type="entry name" value="PUMILIO HOMOLOG 3"/>
    <property type="match status" value="1"/>
</dbReference>
<dbReference type="Pfam" id="PF08144">
    <property type="entry name" value="CPL"/>
    <property type="match status" value="1"/>
</dbReference>
<dbReference type="SMART" id="SM00025">
    <property type="entry name" value="Pumilio"/>
    <property type="match status" value="5"/>
</dbReference>
<dbReference type="SUPFAM" id="SSF48371">
    <property type="entry name" value="ARM repeat"/>
    <property type="match status" value="1"/>
</dbReference>
<dbReference type="PROSITE" id="PS50302">
    <property type="entry name" value="PUM"/>
    <property type="match status" value="6"/>
</dbReference>
<dbReference type="PROSITE" id="PS50303">
    <property type="entry name" value="PUM_HD"/>
    <property type="match status" value="1"/>
</dbReference>
<protein>
    <recommendedName>
        <fullName>Pumilio homology domain family member 6</fullName>
    </recommendedName>
</protein>
<name>PUF6_SCHPO</name>
<accession>Q9UU76</accession>
<reference key="1">
    <citation type="journal article" date="2002" name="Nature">
        <title>The genome sequence of Schizosaccharomyces pombe.</title>
        <authorList>
            <person name="Wood V."/>
            <person name="Gwilliam R."/>
            <person name="Rajandream M.A."/>
            <person name="Lyne M.H."/>
            <person name="Lyne R."/>
            <person name="Stewart A."/>
            <person name="Sgouros J.G."/>
            <person name="Peat N."/>
            <person name="Hayles J."/>
            <person name="Baker S.G."/>
            <person name="Basham D."/>
            <person name="Bowman S."/>
            <person name="Brooks K."/>
            <person name="Brown D."/>
            <person name="Brown S."/>
            <person name="Chillingworth T."/>
            <person name="Churcher C.M."/>
            <person name="Collins M."/>
            <person name="Connor R."/>
            <person name="Cronin A."/>
            <person name="Davis P."/>
            <person name="Feltwell T."/>
            <person name="Fraser A."/>
            <person name="Gentles S."/>
            <person name="Goble A."/>
            <person name="Hamlin N."/>
            <person name="Harris D.E."/>
            <person name="Hidalgo J."/>
            <person name="Hodgson G."/>
            <person name="Holroyd S."/>
            <person name="Hornsby T."/>
            <person name="Howarth S."/>
            <person name="Huckle E.J."/>
            <person name="Hunt S."/>
            <person name="Jagels K."/>
            <person name="James K.D."/>
            <person name="Jones L."/>
            <person name="Jones M."/>
            <person name="Leather S."/>
            <person name="McDonald S."/>
            <person name="McLean J."/>
            <person name="Mooney P."/>
            <person name="Moule S."/>
            <person name="Mungall K.L."/>
            <person name="Murphy L.D."/>
            <person name="Niblett D."/>
            <person name="Odell C."/>
            <person name="Oliver K."/>
            <person name="O'Neil S."/>
            <person name="Pearson D."/>
            <person name="Quail M.A."/>
            <person name="Rabbinowitsch E."/>
            <person name="Rutherford K.M."/>
            <person name="Rutter S."/>
            <person name="Saunders D."/>
            <person name="Seeger K."/>
            <person name="Sharp S."/>
            <person name="Skelton J."/>
            <person name="Simmonds M.N."/>
            <person name="Squares R."/>
            <person name="Squares S."/>
            <person name="Stevens K."/>
            <person name="Taylor K."/>
            <person name="Taylor R.G."/>
            <person name="Tivey A."/>
            <person name="Walsh S.V."/>
            <person name="Warren T."/>
            <person name="Whitehead S."/>
            <person name="Woodward J.R."/>
            <person name="Volckaert G."/>
            <person name="Aert R."/>
            <person name="Robben J."/>
            <person name="Grymonprez B."/>
            <person name="Weltjens I."/>
            <person name="Vanstreels E."/>
            <person name="Rieger M."/>
            <person name="Schaefer M."/>
            <person name="Mueller-Auer S."/>
            <person name="Gabel C."/>
            <person name="Fuchs M."/>
            <person name="Duesterhoeft A."/>
            <person name="Fritzc C."/>
            <person name="Holzer E."/>
            <person name="Moestl D."/>
            <person name="Hilbert H."/>
            <person name="Borzym K."/>
            <person name="Langer I."/>
            <person name="Beck A."/>
            <person name="Lehrach H."/>
            <person name="Reinhardt R."/>
            <person name="Pohl T.M."/>
            <person name="Eger P."/>
            <person name="Zimmermann W."/>
            <person name="Wedler H."/>
            <person name="Wambutt R."/>
            <person name="Purnelle B."/>
            <person name="Goffeau A."/>
            <person name="Cadieu E."/>
            <person name="Dreano S."/>
            <person name="Gloux S."/>
            <person name="Lelaure V."/>
            <person name="Mottier S."/>
            <person name="Galibert F."/>
            <person name="Aves S.J."/>
            <person name="Xiang Z."/>
            <person name="Hunt C."/>
            <person name="Moore K."/>
            <person name="Hurst S.M."/>
            <person name="Lucas M."/>
            <person name="Rochet M."/>
            <person name="Gaillardin C."/>
            <person name="Tallada V.A."/>
            <person name="Garzon A."/>
            <person name="Thode G."/>
            <person name="Daga R.R."/>
            <person name="Cruzado L."/>
            <person name="Jimenez J."/>
            <person name="Sanchez M."/>
            <person name="del Rey F."/>
            <person name="Benito J."/>
            <person name="Dominguez A."/>
            <person name="Revuelta J.L."/>
            <person name="Moreno S."/>
            <person name="Armstrong J."/>
            <person name="Forsburg S.L."/>
            <person name="Cerutti L."/>
            <person name="Lowe T."/>
            <person name="McCombie W.R."/>
            <person name="Paulsen I."/>
            <person name="Potashkin J."/>
            <person name="Shpakovski G.V."/>
            <person name="Ussery D."/>
            <person name="Barrell B.G."/>
            <person name="Nurse P."/>
        </authorList>
    </citation>
    <scope>NUCLEOTIDE SEQUENCE [LARGE SCALE GENOMIC DNA]</scope>
    <source>
        <strain>972 / ATCC 24843</strain>
    </source>
</reference>
<reference key="2">
    <citation type="journal article" date="2006" name="Nat. Biotechnol.">
        <title>ORFeome cloning and global analysis of protein localization in the fission yeast Schizosaccharomyces pombe.</title>
        <authorList>
            <person name="Matsuyama A."/>
            <person name="Arai R."/>
            <person name="Yashiroda Y."/>
            <person name="Shirai A."/>
            <person name="Kamata A."/>
            <person name="Sekido S."/>
            <person name="Kobayashi Y."/>
            <person name="Hashimoto A."/>
            <person name="Hamamoto M."/>
            <person name="Hiraoka Y."/>
            <person name="Horinouchi S."/>
            <person name="Yoshida M."/>
        </authorList>
    </citation>
    <scope>SUBCELLULAR LOCATION [LARGE SCALE ANALYSIS]</scope>
</reference>
<reference key="3">
    <citation type="journal article" date="2008" name="J. Proteome Res.">
        <title>Phosphoproteome analysis of fission yeast.</title>
        <authorList>
            <person name="Wilson-Grady J.T."/>
            <person name="Villen J."/>
            <person name="Gygi S.P."/>
        </authorList>
    </citation>
    <scope>PHOSPHORYLATION [LARGE SCALE ANALYSIS] AT SER-34; SER-36; SER-79; SER-81 AND SER-88</scope>
    <scope>IDENTIFICATION BY MASS SPECTROMETRY</scope>
</reference>
<keyword id="KW-0539">Nucleus</keyword>
<keyword id="KW-0597">Phosphoprotein</keyword>
<keyword id="KW-1185">Reference proteome</keyword>
<keyword id="KW-0677">Repeat</keyword>
<keyword id="KW-0678">Repressor</keyword>
<keyword id="KW-0694">RNA-binding</keyword>
<keyword id="KW-0810">Translation regulation</keyword>